<gene>
    <name evidence="1" type="primary">tarI1</name>
    <name type="ordered locus">SAS0232</name>
</gene>
<sequence>MKYAGILAGGIGSRMGNVPLPKQFLDLDNKPILIHTLEKFILINDFEKIIIATPQQWMTHTKDTLRKFKISDERIEVIQGGSDRNDTIMNIVKHIESTNGINDDDVIVTHDAVRPFLTHRIIKENIQAALEYGAVDTVIDAIDTIVTSKDNQTIDAIPVRNEMYQGQTPQSFNINLLKESYAQLSDEQKSILSDACKIIVETNKPVRLVKGELYNIKVTTPYDLKVANAIIRGGIADD</sequence>
<reference key="1">
    <citation type="journal article" date="2004" name="Proc. Natl. Acad. Sci. U.S.A.">
        <title>Complete genomes of two clinical Staphylococcus aureus strains: evidence for the rapid evolution of virulence and drug resistance.</title>
        <authorList>
            <person name="Holden M.T.G."/>
            <person name="Feil E.J."/>
            <person name="Lindsay J.A."/>
            <person name="Peacock S.J."/>
            <person name="Day N.P.J."/>
            <person name="Enright M.C."/>
            <person name="Foster T.J."/>
            <person name="Moore C.E."/>
            <person name="Hurst L."/>
            <person name="Atkin R."/>
            <person name="Barron A."/>
            <person name="Bason N."/>
            <person name="Bentley S.D."/>
            <person name="Chillingworth C."/>
            <person name="Chillingworth T."/>
            <person name="Churcher C."/>
            <person name="Clark L."/>
            <person name="Corton C."/>
            <person name="Cronin A."/>
            <person name="Doggett J."/>
            <person name="Dowd L."/>
            <person name="Feltwell T."/>
            <person name="Hance Z."/>
            <person name="Harris B."/>
            <person name="Hauser H."/>
            <person name="Holroyd S."/>
            <person name="Jagels K."/>
            <person name="James K.D."/>
            <person name="Lennard N."/>
            <person name="Line A."/>
            <person name="Mayes R."/>
            <person name="Moule S."/>
            <person name="Mungall K."/>
            <person name="Ormond D."/>
            <person name="Quail M.A."/>
            <person name="Rabbinowitsch E."/>
            <person name="Rutherford K.M."/>
            <person name="Sanders M."/>
            <person name="Sharp S."/>
            <person name="Simmonds M."/>
            <person name="Stevens K."/>
            <person name="Whitehead S."/>
            <person name="Barrell B.G."/>
            <person name="Spratt B.G."/>
            <person name="Parkhill J."/>
        </authorList>
    </citation>
    <scope>NUCLEOTIDE SEQUENCE [LARGE SCALE GENOMIC DNA]</scope>
    <source>
        <strain>MSSA476</strain>
    </source>
</reference>
<comment type="function">
    <text evidence="1">Catalyzes the transfer of the cytidylyl group of CTP to D-ribitol 5-phosphate.</text>
</comment>
<comment type="catalytic activity">
    <reaction evidence="1">
        <text>D-ribitol 5-phosphate + CTP + H(+) = CDP-L-ribitol + diphosphate</text>
        <dbReference type="Rhea" id="RHEA:12456"/>
        <dbReference type="ChEBI" id="CHEBI:15378"/>
        <dbReference type="ChEBI" id="CHEBI:33019"/>
        <dbReference type="ChEBI" id="CHEBI:37563"/>
        <dbReference type="ChEBI" id="CHEBI:57608"/>
        <dbReference type="ChEBI" id="CHEBI:57695"/>
        <dbReference type="EC" id="2.7.7.40"/>
    </reaction>
</comment>
<comment type="pathway">
    <text evidence="1">Cell wall biogenesis; poly(ribitol phosphate) teichoic acid biosynthesis.</text>
</comment>
<comment type="similarity">
    <text evidence="1">Belongs to the IspD/TarI cytidylyltransferase family. TarI subfamily.</text>
</comment>
<dbReference type="EC" id="2.7.7.40" evidence="1"/>
<dbReference type="EMBL" id="BX571857">
    <property type="protein sequence ID" value="CAG42002.1"/>
    <property type="molecule type" value="Genomic_DNA"/>
</dbReference>
<dbReference type="RefSeq" id="WP_000872486.1">
    <property type="nucleotide sequence ID" value="NC_002953.3"/>
</dbReference>
<dbReference type="SMR" id="Q6GCL7"/>
<dbReference type="KEGG" id="sas:SAS0232"/>
<dbReference type="HOGENOM" id="CLU_061281_2_3_9"/>
<dbReference type="UniPathway" id="UPA00790"/>
<dbReference type="GO" id="GO:0050518">
    <property type="term" value="F:2-C-methyl-D-erythritol 4-phosphate cytidylyltransferase activity"/>
    <property type="evidence" value="ECO:0007669"/>
    <property type="project" value="TreeGrafter"/>
</dbReference>
<dbReference type="GO" id="GO:0047349">
    <property type="term" value="F:D-ribitol-5-phosphate cytidylyltransferase activity"/>
    <property type="evidence" value="ECO:0007669"/>
    <property type="project" value="UniProtKB-UniRule"/>
</dbReference>
<dbReference type="GO" id="GO:0071555">
    <property type="term" value="P:cell wall organization"/>
    <property type="evidence" value="ECO:0007669"/>
    <property type="project" value="UniProtKB-KW"/>
</dbReference>
<dbReference type="GO" id="GO:0008299">
    <property type="term" value="P:isoprenoid biosynthetic process"/>
    <property type="evidence" value="ECO:0007669"/>
    <property type="project" value="InterPro"/>
</dbReference>
<dbReference type="GO" id="GO:1902012">
    <property type="term" value="P:poly(ribitol phosphate) teichoic acid biosynthetic process"/>
    <property type="evidence" value="ECO:0007669"/>
    <property type="project" value="UniProtKB-UniRule"/>
</dbReference>
<dbReference type="CDD" id="cd02516">
    <property type="entry name" value="CDP-ME_synthetase"/>
    <property type="match status" value="1"/>
</dbReference>
<dbReference type="FunFam" id="3.90.550.10:FF:000003">
    <property type="entry name" value="2-C-methyl-D-erythritol 4-phosphate cytidylyltransferase"/>
    <property type="match status" value="1"/>
</dbReference>
<dbReference type="Gene3D" id="3.90.550.10">
    <property type="entry name" value="Spore Coat Polysaccharide Biosynthesis Protein SpsA, Chain A"/>
    <property type="match status" value="1"/>
</dbReference>
<dbReference type="HAMAP" id="MF_02068">
    <property type="entry name" value="TarI"/>
    <property type="match status" value="1"/>
</dbReference>
<dbReference type="InterPro" id="IPR034683">
    <property type="entry name" value="IspD/TarI"/>
</dbReference>
<dbReference type="InterPro" id="IPR050088">
    <property type="entry name" value="IspD/TarI_cytidylyltransf_bact"/>
</dbReference>
<dbReference type="InterPro" id="IPR018294">
    <property type="entry name" value="ISPD_synthase_CS"/>
</dbReference>
<dbReference type="InterPro" id="IPR029044">
    <property type="entry name" value="Nucleotide-diphossugar_trans"/>
</dbReference>
<dbReference type="InterPro" id="IPR034709">
    <property type="entry name" value="TarI"/>
</dbReference>
<dbReference type="NCBIfam" id="NF001183">
    <property type="entry name" value="PRK00155.1-3"/>
    <property type="match status" value="1"/>
</dbReference>
<dbReference type="NCBIfam" id="NF009924">
    <property type="entry name" value="PRK13385.1"/>
    <property type="match status" value="1"/>
</dbReference>
<dbReference type="PANTHER" id="PTHR32125">
    <property type="entry name" value="2-C-METHYL-D-ERYTHRITOL 4-PHOSPHATE CYTIDYLYLTRANSFERASE, CHLOROPLASTIC"/>
    <property type="match status" value="1"/>
</dbReference>
<dbReference type="PANTHER" id="PTHR32125:SF8">
    <property type="entry name" value="RIBITOL-5-PHOSPHATE CYTIDYLYLTRANSFERASE"/>
    <property type="match status" value="1"/>
</dbReference>
<dbReference type="Pfam" id="PF01128">
    <property type="entry name" value="IspD"/>
    <property type="match status" value="1"/>
</dbReference>
<dbReference type="SUPFAM" id="SSF53448">
    <property type="entry name" value="Nucleotide-diphospho-sugar transferases"/>
    <property type="match status" value="1"/>
</dbReference>
<dbReference type="PROSITE" id="PS01295">
    <property type="entry name" value="ISPD"/>
    <property type="match status" value="1"/>
</dbReference>
<keyword id="KW-0961">Cell wall biogenesis/degradation</keyword>
<keyword id="KW-0548">Nucleotidyltransferase</keyword>
<keyword id="KW-0777">Teichoic acid biosynthesis</keyword>
<keyword id="KW-0808">Transferase</keyword>
<proteinExistence type="inferred from homology"/>
<accession>Q6GCL7</accession>
<name>TARI1_STAAS</name>
<organism>
    <name type="scientific">Staphylococcus aureus (strain MSSA476)</name>
    <dbReference type="NCBI Taxonomy" id="282459"/>
    <lineage>
        <taxon>Bacteria</taxon>
        <taxon>Bacillati</taxon>
        <taxon>Bacillota</taxon>
        <taxon>Bacilli</taxon>
        <taxon>Bacillales</taxon>
        <taxon>Staphylococcaceae</taxon>
        <taxon>Staphylococcus</taxon>
    </lineage>
</organism>
<evidence type="ECO:0000255" key="1">
    <source>
        <dbReference type="HAMAP-Rule" id="MF_02068"/>
    </source>
</evidence>
<feature type="chain" id="PRO_0000075622" description="Ribitol-5-phosphate cytidylyltransferase 1">
    <location>
        <begin position="1"/>
        <end position="238"/>
    </location>
</feature>
<feature type="binding site" evidence="1">
    <location>
        <begin position="7"/>
        <end position="10"/>
    </location>
    <ligand>
        <name>CTP</name>
        <dbReference type="ChEBI" id="CHEBI:37563"/>
    </ligand>
</feature>
<feature type="binding site" evidence="1">
    <location>
        <begin position="81"/>
        <end position="87"/>
    </location>
    <ligand>
        <name>CTP</name>
        <dbReference type="ChEBI" id="CHEBI:37563"/>
    </ligand>
</feature>
<feature type="site" description="Transition state stabilizer" evidence="1">
    <location>
        <position position="14"/>
    </location>
</feature>
<feature type="site" description="Transition state stabilizer" evidence="1">
    <location>
        <position position="22"/>
    </location>
</feature>
<feature type="site" description="Positions ribitol 5-phosphate for the nucleophilic attack" evidence="1">
    <location>
        <position position="160"/>
    </location>
</feature>
<feature type="site" description="Positions ribitol 5-phosphate for the nucleophilic attack" evidence="1">
    <location>
        <position position="217"/>
    </location>
</feature>
<protein>
    <recommendedName>
        <fullName evidence="1">Ribitol-5-phosphate cytidylyltransferase 1</fullName>
        <ecNumber evidence="1">2.7.7.40</ecNumber>
    </recommendedName>
</protein>